<accession>Q9SLB8</accession>
<comment type="function">
    <text evidence="3">Probable transcription factor that may regulate cell division and growth.</text>
</comment>
<comment type="subcellular location">
    <subcellularLocation>
        <location evidence="3">Nucleus</location>
    </subcellularLocation>
</comment>
<comment type="alternative products">
    <event type="alternative splicing"/>
    <isoform>
        <id>Q9SLB8-1</id>
        <name>1</name>
        <sequence type="displayed"/>
    </isoform>
    <text evidence="5">A number of isoforms are produced. According to EST sequences.</text>
</comment>
<comment type="tissue specificity">
    <text evidence="3">Expressed in roots, stems, axillary buds and flowers.</text>
</comment>
<comment type="miscellaneous">
    <text evidence="3">Plants over-expressing ZFP11 show are dwarf, have abnormal leaf morphology, flower early and most of the plants are sterile. The stunting phenotype is due to reduced cell size and cell numbers.</text>
</comment>
<organism>
    <name type="scientific">Arabidopsis thaliana</name>
    <name type="common">Mouse-ear cress</name>
    <dbReference type="NCBI Taxonomy" id="3702"/>
    <lineage>
        <taxon>Eukaryota</taxon>
        <taxon>Viridiplantae</taxon>
        <taxon>Streptophyta</taxon>
        <taxon>Embryophyta</taxon>
        <taxon>Tracheophyta</taxon>
        <taxon>Spermatophyta</taxon>
        <taxon>Magnoliopsida</taxon>
        <taxon>eudicotyledons</taxon>
        <taxon>Gunneridae</taxon>
        <taxon>Pentapetalae</taxon>
        <taxon>rosids</taxon>
        <taxon>malvids</taxon>
        <taxon>Brassicales</taxon>
        <taxon>Brassicaceae</taxon>
        <taxon>Camelineae</taxon>
        <taxon>Arabidopsis</taxon>
    </lineage>
</organism>
<evidence type="ECO:0000255" key="1">
    <source>
        <dbReference type="PROSITE-ProRule" id="PRU00042"/>
    </source>
</evidence>
<evidence type="ECO:0000256" key="2">
    <source>
        <dbReference type="SAM" id="MobiDB-lite"/>
    </source>
</evidence>
<evidence type="ECO:0000269" key="3">
    <source ref="4"/>
</evidence>
<evidence type="ECO:0000303" key="4">
    <source ref="4"/>
</evidence>
<evidence type="ECO:0000305" key="5"/>
<evidence type="ECO:0000312" key="6">
    <source>
        <dbReference type="Araport" id="AT2G42410"/>
    </source>
</evidence>
<dbReference type="EMBL" id="AC005956">
    <property type="protein sequence ID" value="AAD23724.1"/>
    <property type="molecule type" value="Genomic_DNA"/>
</dbReference>
<dbReference type="EMBL" id="CP002685">
    <property type="protein sequence ID" value="AEC10118.1"/>
    <property type="molecule type" value="Genomic_DNA"/>
</dbReference>
<dbReference type="EMBL" id="CP002685">
    <property type="protein sequence ID" value="ANM62453.1"/>
    <property type="molecule type" value="Genomic_DNA"/>
</dbReference>
<dbReference type="EMBL" id="AB493586">
    <property type="protein sequence ID" value="BAH30424.1"/>
    <property type="molecule type" value="Genomic_DNA"/>
</dbReference>
<dbReference type="PIR" id="F84853">
    <property type="entry name" value="F84853"/>
</dbReference>
<dbReference type="RefSeq" id="NP_001324610.1">
    <molecule id="Q9SLB8-1"/>
    <property type="nucleotide sequence ID" value="NM_001336972.1"/>
</dbReference>
<dbReference type="RefSeq" id="NP_181770.1">
    <molecule id="Q9SLB8-1"/>
    <property type="nucleotide sequence ID" value="NM_129803.2"/>
</dbReference>
<dbReference type="IntAct" id="Q9SLB8">
    <property type="interactions" value="5"/>
</dbReference>
<dbReference type="STRING" id="3702.Q9SLB8"/>
<dbReference type="PaxDb" id="3702-AT2G42410.1"/>
<dbReference type="ProteomicsDB" id="232333">
    <molecule id="Q9SLB8-1"/>
</dbReference>
<dbReference type="EnsemblPlants" id="AT2G42410.1">
    <molecule id="Q9SLB8-1"/>
    <property type="protein sequence ID" value="AT2G42410.1"/>
    <property type="gene ID" value="AT2G42410"/>
</dbReference>
<dbReference type="EnsemblPlants" id="AT2G42410.2">
    <molecule id="Q9SLB8-1"/>
    <property type="protein sequence ID" value="AT2G42410.2"/>
    <property type="gene ID" value="AT2G42410"/>
</dbReference>
<dbReference type="GeneID" id="818842"/>
<dbReference type="Gramene" id="AT2G42410.1">
    <molecule id="Q9SLB8-1"/>
    <property type="protein sequence ID" value="AT2G42410.1"/>
    <property type="gene ID" value="AT2G42410"/>
</dbReference>
<dbReference type="Gramene" id="AT2G42410.2">
    <molecule id="Q9SLB8-1"/>
    <property type="protein sequence ID" value="AT2G42410.2"/>
    <property type="gene ID" value="AT2G42410"/>
</dbReference>
<dbReference type="KEGG" id="ath:AT2G42410"/>
<dbReference type="Araport" id="AT2G42410"/>
<dbReference type="TAIR" id="AT2G42410">
    <property type="gene designation" value="ZFP11"/>
</dbReference>
<dbReference type="eggNOG" id="ENOG502RXP0">
    <property type="taxonomic scope" value="Eukaryota"/>
</dbReference>
<dbReference type="HOGENOM" id="CLU_068782_0_2_1"/>
<dbReference type="InParanoid" id="Q9SLB8"/>
<dbReference type="OrthoDB" id="1708403at2759"/>
<dbReference type="PhylomeDB" id="Q9SLB8"/>
<dbReference type="PRO" id="PR:Q9SLB8"/>
<dbReference type="Proteomes" id="UP000006548">
    <property type="component" value="Chromosome 2"/>
</dbReference>
<dbReference type="ExpressionAtlas" id="Q9SLB8">
    <property type="expression patterns" value="baseline and differential"/>
</dbReference>
<dbReference type="GO" id="GO:0005634">
    <property type="term" value="C:nucleus"/>
    <property type="evidence" value="ECO:0000314"/>
    <property type="project" value="UniProtKB"/>
</dbReference>
<dbReference type="GO" id="GO:0003700">
    <property type="term" value="F:DNA-binding transcription factor activity"/>
    <property type="evidence" value="ECO:0000250"/>
    <property type="project" value="TAIR"/>
</dbReference>
<dbReference type="GO" id="GO:0008270">
    <property type="term" value="F:zinc ion binding"/>
    <property type="evidence" value="ECO:0007669"/>
    <property type="project" value="UniProtKB-KW"/>
</dbReference>
<dbReference type="GO" id="GO:0006355">
    <property type="term" value="P:regulation of DNA-templated transcription"/>
    <property type="evidence" value="ECO:0000304"/>
    <property type="project" value="TAIR"/>
</dbReference>
<dbReference type="Gene3D" id="3.30.160.60">
    <property type="entry name" value="Classic Zinc Finger"/>
    <property type="match status" value="1"/>
</dbReference>
<dbReference type="InterPro" id="IPR052426">
    <property type="entry name" value="Plant_dev_regulator"/>
</dbReference>
<dbReference type="InterPro" id="IPR036236">
    <property type="entry name" value="Znf_C2H2_sf"/>
</dbReference>
<dbReference type="InterPro" id="IPR013087">
    <property type="entry name" value="Znf_C2H2_type"/>
</dbReference>
<dbReference type="PANTHER" id="PTHR45801">
    <property type="entry name" value="OS07G0101800 PROTEIN"/>
    <property type="match status" value="1"/>
</dbReference>
<dbReference type="PANTHER" id="PTHR45801:SF102">
    <property type="entry name" value="ZINC FINGER PROTEIN 11"/>
    <property type="match status" value="1"/>
</dbReference>
<dbReference type="Pfam" id="PF13912">
    <property type="entry name" value="zf-C2H2_6"/>
    <property type="match status" value="1"/>
</dbReference>
<dbReference type="SMART" id="SM00355">
    <property type="entry name" value="ZnF_C2H2"/>
    <property type="match status" value="1"/>
</dbReference>
<dbReference type="SUPFAM" id="SSF57667">
    <property type="entry name" value="beta-beta-alpha zinc fingers"/>
    <property type="match status" value="1"/>
</dbReference>
<dbReference type="PROSITE" id="PS00028">
    <property type="entry name" value="ZINC_FINGER_C2H2_1"/>
    <property type="match status" value="1"/>
</dbReference>
<dbReference type="PROSITE" id="PS50157">
    <property type="entry name" value="ZINC_FINGER_C2H2_2"/>
    <property type="match status" value="1"/>
</dbReference>
<protein>
    <recommendedName>
        <fullName evidence="5">Zinc finger protein 11</fullName>
        <shortName evidence="4">AtZFP11</shortName>
    </recommendedName>
</protein>
<feature type="chain" id="PRO_0000438922" description="Zinc finger protein 11">
    <location>
        <begin position="1"/>
        <end position="214"/>
    </location>
</feature>
<feature type="zinc finger region" description="C2H2-type" evidence="1">
    <location>
        <begin position="49"/>
        <end position="71"/>
    </location>
</feature>
<feature type="region of interest" description="Disordered" evidence="2">
    <location>
        <begin position="1"/>
        <end position="27"/>
    </location>
</feature>
<feature type="region of interest" description="Disordered" evidence="2">
    <location>
        <begin position="89"/>
        <end position="130"/>
    </location>
</feature>
<feature type="short sequence motif" description="Nuclear localization signal" evidence="3">
    <location>
        <begin position="72"/>
        <end position="79"/>
    </location>
</feature>
<feature type="compositionally biased region" description="Low complexity" evidence="2">
    <location>
        <begin position="102"/>
        <end position="111"/>
    </location>
</feature>
<feature type="compositionally biased region" description="Polar residues" evidence="2">
    <location>
        <begin position="117"/>
        <end position="128"/>
    </location>
</feature>
<keyword id="KW-0025">Alternative splicing</keyword>
<keyword id="KW-0217">Developmental protein</keyword>
<keyword id="KW-0341">Growth regulation</keyword>
<keyword id="KW-0479">Metal-binding</keyword>
<keyword id="KW-0539">Nucleus</keyword>
<keyword id="KW-1185">Reference proteome</keyword>
<keyword id="KW-0804">Transcription</keyword>
<keyword id="KW-0805">Transcription regulation</keyword>
<keyword id="KW-0862">Zinc</keyword>
<keyword id="KW-0863">Zinc-finger</keyword>
<gene>
    <name evidence="4" type="primary">ZFP11</name>
    <name evidence="6" type="ordered locus">At2g42410</name>
</gene>
<sequence length="214" mass="24353">MKRTHLASFSNRDKTQEEEGEDGNGDNRVIMNHYKNYEAGLIPWPPKNYTCSFCRREFRSAQALGGHMNVHRRDRAKLRQIPSWLFEPHHHTPIANPNPNFSSSSSSSTTTAHLEPSLTNQRSKTTPFPSARFDLLDSTTSYGGLMMDREKNKSNVCSREIKKSAIDACHSVRCEISRGDLMNKKDDQVMGLELGMSLRNPNQVLDLELRLGYL</sequence>
<name>ZFP11_ARATH</name>
<proteinExistence type="evidence at transcript level"/>
<reference key="1">
    <citation type="journal article" date="1999" name="Nature">
        <title>Sequence and analysis of chromosome 2 of the plant Arabidopsis thaliana.</title>
        <authorList>
            <person name="Lin X."/>
            <person name="Kaul S."/>
            <person name="Rounsley S.D."/>
            <person name="Shea T.P."/>
            <person name="Benito M.-I."/>
            <person name="Town C.D."/>
            <person name="Fujii C.Y."/>
            <person name="Mason T.M."/>
            <person name="Bowman C.L."/>
            <person name="Barnstead M.E."/>
            <person name="Feldblyum T.V."/>
            <person name="Buell C.R."/>
            <person name="Ketchum K.A."/>
            <person name="Lee J.J."/>
            <person name="Ronning C.M."/>
            <person name="Koo H.L."/>
            <person name="Moffat K.S."/>
            <person name="Cronin L.A."/>
            <person name="Shen M."/>
            <person name="Pai G."/>
            <person name="Van Aken S."/>
            <person name="Umayam L."/>
            <person name="Tallon L.J."/>
            <person name="Gill J.E."/>
            <person name="Adams M.D."/>
            <person name="Carrera A.J."/>
            <person name="Creasy T.H."/>
            <person name="Goodman H.M."/>
            <person name="Somerville C.R."/>
            <person name="Copenhaver G.P."/>
            <person name="Preuss D."/>
            <person name="Nierman W.C."/>
            <person name="White O."/>
            <person name="Eisen J.A."/>
            <person name="Salzberg S.L."/>
            <person name="Fraser C.M."/>
            <person name="Venter J.C."/>
        </authorList>
    </citation>
    <scope>NUCLEOTIDE SEQUENCE [LARGE SCALE GENOMIC DNA]</scope>
    <source>
        <strain>cv. Columbia</strain>
    </source>
</reference>
<reference key="2">
    <citation type="journal article" date="2017" name="Plant J.">
        <title>Araport11: a complete reannotation of the Arabidopsis thaliana reference genome.</title>
        <authorList>
            <person name="Cheng C.Y."/>
            <person name="Krishnakumar V."/>
            <person name="Chan A.P."/>
            <person name="Thibaud-Nissen F."/>
            <person name="Schobel S."/>
            <person name="Town C.D."/>
        </authorList>
    </citation>
    <scope>GENOME REANNOTATION</scope>
    <source>
        <strain>cv. Columbia</strain>
    </source>
</reference>
<reference key="3">
    <citation type="submission" date="2009-03" db="EMBL/GenBank/DDBJ databases">
        <title>ORF cloning and analysis of Arabidopsis transcription factor genes.</title>
        <authorList>
            <person name="Fujita M."/>
            <person name="Mizukado S."/>
            <person name="Seki M."/>
            <person name="Shinozaki K."/>
            <person name="Mitsuda N."/>
            <person name="Takiguchi Y."/>
            <person name="Takagi M."/>
        </authorList>
    </citation>
    <scope>NUCLEOTIDE SEQUENCE [LARGE SCALE GENOMIC DNA]</scope>
</reference>
<reference key="4">
    <citation type="journal article" date="2003" name="Plant Sci.">
        <title>Expression and deletion analysis of an Arabidopsis SUPERMAN-like zinc finger gene.</title>
        <authorList>
            <person name="Dinkins R.D."/>
            <person name="Pflipsen C."/>
            <person name="Collins G.B."/>
        </authorList>
    </citation>
    <scope>FUNCTION</scope>
    <scope>SUBCELLULAR LOCATION</scope>
    <scope>TISSUE SPECIFICITY</scope>
</reference>